<proteinExistence type="inferred from homology"/>
<feature type="chain" id="PRO_0000121927" description="tRNA pseudouridine synthase B">
    <location>
        <begin position="1"/>
        <end position="291"/>
    </location>
</feature>
<feature type="active site" description="Nucleophile" evidence="1">
    <location>
        <position position="41"/>
    </location>
</feature>
<protein>
    <recommendedName>
        <fullName evidence="1">tRNA pseudouridine synthase B</fullName>
        <ecNumber evidence="1">5.4.99.25</ecNumber>
    </recommendedName>
    <alternativeName>
        <fullName evidence="1">tRNA pseudouridine(55) synthase</fullName>
        <shortName evidence="1">Psi55 synthase</shortName>
    </alternativeName>
    <alternativeName>
        <fullName evidence="1">tRNA pseudouridylate synthase</fullName>
    </alternativeName>
    <alternativeName>
        <fullName evidence="1">tRNA-uridine isomerase</fullName>
    </alternativeName>
</protein>
<accession>P59884</accession>
<organism>
    <name type="scientific">Parasynechococcus marenigrum (strain WH8102)</name>
    <dbReference type="NCBI Taxonomy" id="84588"/>
    <lineage>
        <taxon>Bacteria</taxon>
        <taxon>Bacillati</taxon>
        <taxon>Cyanobacteriota</taxon>
        <taxon>Cyanophyceae</taxon>
        <taxon>Synechococcales</taxon>
        <taxon>Prochlorococcaceae</taxon>
        <taxon>Parasynechococcus</taxon>
        <taxon>Parasynechococcus marenigrum</taxon>
    </lineage>
</organism>
<sequence>MDGPFGFVVIDKPAGHTSHSCVSRLRRCYGLKRVGHGGTLDPAVTGVLPIALGPATRLLPYLPGDKTYRGVIQLGSITSSDDLEGELLRQAPWPDLQPEELEVALAPFRGPIQQRPPQVSAVHVDGERAHARARRGEQMVLPPRPVTIHRLQLLHWDPNQGQLTLEVHCSAGTYIRSLARDLGEQLGCGGCLAQLRRTQALGFLESQAQALPEADATPPPPLSPLLALEHLPRRQLTDSEEADWRCGRRLSLDPGPGDAVVVCNADGSMAGIGLRQEDDQLQPKVVFDASG</sequence>
<name>TRUB_PARMW</name>
<comment type="function">
    <text evidence="1">Responsible for synthesis of pseudouridine from uracil-55 in the psi GC loop of transfer RNAs.</text>
</comment>
<comment type="catalytic activity">
    <reaction evidence="1">
        <text>uridine(55) in tRNA = pseudouridine(55) in tRNA</text>
        <dbReference type="Rhea" id="RHEA:42532"/>
        <dbReference type="Rhea" id="RHEA-COMP:10101"/>
        <dbReference type="Rhea" id="RHEA-COMP:10102"/>
        <dbReference type="ChEBI" id="CHEBI:65314"/>
        <dbReference type="ChEBI" id="CHEBI:65315"/>
        <dbReference type="EC" id="5.4.99.25"/>
    </reaction>
</comment>
<comment type="similarity">
    <text evidence="1">Belongs to the pseudouridine synthase TruB family. Type 1 subfamily.</text>
</comment>
<evidence type="ECO:0000255" key="1">
    <source>
        <dbReference type="HAMAP-Rule" id="MF_01080"/>
    </source>
</evidence>
<dbReference type="EC" id="5.4.99.25" evidence="1"/>
<dbReference type="EMBL" id="BX569690">
    <property type="protein sequence ID" value="CAE07059.1"/>
    <property type="molecule type" value="Genomic_DNA"/>
</dbReference>
<dbReference type="RefSeq" id="WP_011127413.1">
    <property type="nucleotide sequence ID" value="NC_005070.1"/>
</dbReference>
<dbReference type="SMR" id="P59884"/>
<dbReference type="STRING" id="84588.SYNW0544"/>
<dbReference type="KEGG" id="syw:SYNW0544"/>
<dbReference type="eggNOG" id="COG0130">
    <property type="taxonomic scope" value="Bacteria"/>
</dbReference>
<dbReference type="HOGENOM" id="CLU_032087_0_0_3"/>
<dbReference type="Proteomes" id="UP000001422">
    <property type="component" value="Chromosome"/>
</dbReference>
<dbReference type="GO" id="GO:0003723">
    <property type="term" value="F:RNA binding"/>
    <property type="evidence" value="ECO:0007669"/>
    <property type="project" value="InterPro"/>
</dbReference>
<dbReference type="GO" id="GO:0160148">
    <property type="term" value="F:tRNA pseudouridine(55) synthase activity"/>
    <property type="evidence" value="ECO:0007669"/>
    <property type="project" value="UniProtKB-EC"/>
</dbReference>
<dbReference type="GO" id="GO:1990481">
    <property type="term" value="P:mRNA pseudouridine synthesis"/>
    <property type="evidence" value="ECO:0007669"/>
    <property type="project" value="TreeGrafter"/>
</dbReference>
<dbReference type="GO" id="GO:0031119">
    <property type="term" value="P:tRNA pseudouridine synthesis"/>
    <property type="evidence" value="ECO:0007669"/>
    <property type="project" value="UniProtKB-UniRule"/>
</dbReference>
<dbReference type="CDD" id="cd02573">
    <property type="entry name" value="PseudoU_synth_EcTruB"/>
    <property type="match status" value="1"/>
</dbReference>
<dbReference type="Gene3D" id="3.30.2350.10">
    <property type="entry name" value="Pseudouridine synthase"/>
    <property type="match status" value="1"/>
</dbReference>
<dbReference type="HAMAP" id="MF_01080">
    <property type="entry name" value="TruB_bact"/>
    <property type="match status" value="1"/>
</dbReference>
<dbReference type="InterPro" id="IPR020103">
    <property type="entry name" value="PsdUridine_synth_cat_dom_sf"/>
</dbReference>
<dbReference type="InterPro" id="IPR002501">
    <property type="entry name" value="PsdUridine_synth_N"/>
</dbReference>
<dbReference type="InterPro" id="IPR014780">
    <property type="entry name" value="tRNA_psdUridine_synth_TruB"/>
</dbReference>
<dbReference type="InterPro" id="IPR032819">
    <property type="entry name" value="TruB_C"/>
</dbReference>
<dbReference type="NCBIfam" id="TIGR00431">
    <property type="entry name" value="TruB"/>
    <property type="match status" value="1"/>
</dbReference>
<dbReference type="PANTHER" id="PTHR13767:SF2">
    <property type="entry name" value="PSEUDOURIDYLATE SYNTHASE TRUB1"/>
    <property type="match status" value="1"/>
</dbReference>
<dbReference type="PANTHER" id="PTHR13767">
    <property type="entry name" value="TRNA-PSEUDOURIDINE SYNTHASE"/>
    <property type="match status" value="1"/>
</dbReference>
<dbReference type="Pfam" id="PF16198">
    <property type="entry name" value="TruB_C_2"/>
    <property type="match status" value="1"/>
</dbReference>
<dbReference type="Pfam" id="PF01509">
    <property type="entry name" value="TruB_N"/>
    <property type="match status" value="1"/>
</dbReference>
<dbReference type="SUPFAM" id="SSF55120">
    <property type="entry name" value="Pseudouridine synthase"/>
    <property type="match status" value="1"/>
</dbReference>
<reference key="1">
    <citation type="journal article" date="2003" name="Nature">
        <title>The genome of a motile marine Synechococcus.</title>
        <authorList>
            <person name="Palenik B."/>
            <person name="Brahamsha B."/>
            <person name="Larimer F.W."/>
            <person name="Land M.L."/>
            <person name="Hauser L."/>
            <person name="Chain P."/>
            <person name="Lamerdin J.E."/>
            <person name="Regala W."/>
            <person name="Allen E.E."/>
            <person name="McCarren J."/>
            <person name="Paulsen I.T."/>
            <person name="Dufresne A."/>
            <person name="Partensky F."/>
            <person name="Webb E.A."/>
            <person name="Waterbury J."/>
        </authorList>
    </citation>
    <scope>NUCLEOTIDE SEQUENCE [LARGE SCALE GENOMIC DNA]</scope>
    <source>
        <strain>WH8102</strain>
    </source>
</reference>
<keyword id="KW-0413">Isomerase</keyword>
<keyword id="KW-0819">tRNA processing</keyword>
<gene>
    <name evidence="1" type="primary">truB</name>
    <name type="ordered locus">SYNW0544</name>
</gene>